<organism>
    <name type="scientific">Debaryomyces hansenii (strain ATCC 36239 / CBS 767 / BCRC 21394 / JCM 1990 / NBRC 0083 / IGC 2968)</name>
    <name type="common">Yeast</name>
    <name type="synonym">Torulaspora hansenii</name>
    <dbReference type="NCBI Taxonomy" id="284592"/>
    <lineage>
        <taxon>Eukaryota</taxon>
        <taxon>Fungi</taxon>
        <taxon>Dikarya</taxon>
        <taxon>Ascomycota</taxon>
        <taxon>Saccharomycotina</taxon>
        <taxon>Pichiomycetes</taxon>
        <taxon>Debaryomycetaceae</taxon>
        <taxon>Debaryomyces</taxon>
    </lineage>
</organism>
<evidence type="ECO:0000255" key="1">
    <source>
        <dbReference type="HAMAP-Rule" id="MF_03111"/>
    </source>
</evidence>
<sequence>MHILQACKGMEHRSISSLIVNQKRQFLLTATATLVGSMIMNENNRLANKMEKGQLHYKDANAIFNKALEAQESKYFSRSKSNYPGHVPLFTFEKLLMIAGSSLGAYLHPERNEFIVALGESTAITPVLTKLQTQMLSDPVGRQILRERPRITSTSLDLDKLRELPDNTIGKTYVNWLDREGVSPDTRVPVKYIDDEELAYIYQRYRECHDFYHSITGLPIIIEGEIAVKILEFMNIGIPMSGLGALFAPLRLKPSQKERLYNIYYPWGFKSGLNSKPLINVYWENILEEDINEFRHKMGIEQPPDLRNLRKKYFEELKKKKKV</sequence>
<dbReference type="EC" id="4.1.1.130" evidence="1"/>
<dbReference type="EMBL" id="CR382139">
    <property type="protein sequence ID" value="CAG90725.2"/>
    <property type="molecule type" value="Genomic_DNA"/>
</dbReference>
<dbReference type="RefSeq" id="XP_462229.2">
    <property type="nucleotide sequence ID" value="XM_462229.1"/>
</dbReference>
<dbReference type="SMR" id="Q6BHU2"/>
<dbReference type="FunCoup" id="Q6BHU2">
    <property type="interactions" value="556"/>
</dbReference>
<dbReference type="STRING" id="284592.Q6BHU2"/>
<dbReference type="GeneID" id="2905153"/>
<dbReference type="KEGG" id="dha:DEHA2G15796g"/>
<dbReference type="VEuPathDB" id="FungiDB:DEHA2G15796g"/>
<dbReference type="eggNOG" id="KOG3244">
    <property type="taxonomic scope" value="Eukaryota"/>
</dbReference>
<dbReference type="HOGENOM" id="CLU_061241_0_2_1"/>
<dbReference type="InParanoid" id="Q6BHU2"/>
<dbReference type="OMA" id="YYERHFH"/>
<dbReference type="OrthoDB" id="4249at2759"/>
<dbReference type="UniPathway" id="UPA00232"/>
<dbReference type="Proteomes" id="UP000000599">
    <property type="component" value="Chromosome G"/>
</dbReference>
<dbReference type="GO" id="GO:0031314">
    <property type="term" value="C:extrinsic component of mitochondrial inner membrane"/>
    <property type="evidence" value="ECO:0007669"/>
    <property type="project" value="UniProtKB-UniRule"/>
</dbReference>
<dbReference type="GO" id="GO:0006744">
    <property type="term" value="P:ubiquinone biosynthetic process"/>
    <property type="evidence" value="ECO:0007669"/>
    <property type="project" value="UniProtKB-UniRule"/>
</dbReference>
<dbReference type="HAMAP" id="MF_03111">
    <property type="entry name" value="Coq4"/>
    <property type="match status" value="1"/>
</dbReference>
<dbReference type="InterPro" id="IPR007715">
    <property type="entry name" value="Coq4"/>
</dbReference>
<dbReference type="InterPro" id="IPR027540">
    <property type="entry name" value="Coq4_euk"/>
</dbReference>
<dbReference type="PANTHER" id="PTHR12922">
    <property type="entry name" value="UBIQUINONE BIOSYNTHESIS PROTEIN"/>
    <property type="match status" value="1"/>
</dbReference>
<dbReference type="PANTHER" id="PTHR12922:SF7">
    <property type="entry name" value="UBIQUINONE BIOSYNTHESIS PROTEIN COQ4 HOMOLOG, MITOCHONDRIAL"/>
    <property type="match status" value="1"/>
</dbReference>
<dbReference type="Pfam" id="PF05019">
    <property type="entry name" value="Coq4"/>
    <property type="match status" value="1"/>
</dbReference>
<comment type="function">
    <text evidence="1">Lyase that catalyzes the C1-decarboxylation of 4-hydroxy-3-methoxy-5-(all-trans-polyprenyl)benzoic acid into 2-methoxy-6-(all-trans-polyprenyl)phenol during ubiquinone biosynthesis.</text>
</comment>
<comment type="catalytic activity">
    <reaction evidence="1">
        <text>a 4-hydroxy-3-methoxy-5-(all-trans-polyprenyl)benzoate + H(+) = a 2-methoxy-6-(all-trans-polyprenyl)phenol + CO2</text>
        <dbReference type="Rhea" id="RHEA:81179"/>
        <dbReference type="Rhea" id="RHEA-COMP:9551"/>
        <dbReference type="Rhea" id="RHEA-COMP:10931"/>
        <dbReference type="ChEBI" id="CHEBI:15378"/>
        <dbReference type="ChEBI" id="CHEBI:16526"/>
        <dbReference type="ChEBI" id="CHEBI:62731"/>
        <dbReference type="ChEBI" id="CHEBI:84443"/>
        <dbReference type="EC" id="4.1.1.130"/>
    </reaction>
</comment>
<comment type="cofactor">
    <cofactor evidence="1">
        <name>Zn(2+)</name>
        <dbReference type="ChEBI" id="CHEBI:29105"/>
    </cofactor>
</comment>
<comment type="pathway">
    <text evidence="1">Cofactor biosynthesis; ubiquinone biosynthesis.</text>
</comment>
<comment type="subunit">
    <text evidence="1">Component of a multi-subunit COQ enzyme complex, composed of at least COQ3, COQ4, COQ5, COQ6, COQ7 and COQ9.</text>
</comment>
<comment type="subcellular location">
    <subcellularLocation>
        <location evidence="1">Mitochondrion inner membrane</location>
        <topology evidence="1">Peripheral membrane protein</topology>
        <orientation evidence="1">Matrix side</orientation>
    </subcellularLocation>
</comment>
<comment type="miscellaneous">
    <text evidence="1">This protein may be expected to contain an N-terminal transit peptide but none has been predicted.</text>
</comment>
<comment type="similarity">
    <text evidence="1">Belongs to the COQ4 family.</text>
</comment>
<protein>
    <recommendedName>
        <fullName evidence="1">Ubiquinone biosynthesis protein COQ4, mitochondrial</fullName>
    </recommendedName>
    <alternativeName>
        <fullName>4-hydroxy-3-methoxy-5-polyprenylbenzoate decarboxylase</fullName>
        <ecNumber evidence="1">4.1.1.130</ecNumber>
    </alternativeName>
    <alternativeName>
        <fullName evidence="1">Coenzyme Q biosynthesis protein 4</fullName>
    </alternativeName>
</protein>
<gene>
    <name evidence="1" type="primary">COQ4</name>
    <name type="ordered locus">DEHA2G15796g</name>
</gene>
<proteinExistence type="inferred from homology"/>
<keyword id="KW-0456">Lyase</keyword>
<keyword id="KW-0472">Membrane</keyword>
<keyword id="KW-0479">Metal-binding</keyword>
<keyword id="KW-0496">Mitochondrion</keyword>
<keyword id="KW-0999">Mitochondrion inner membrane</keyword>
<keyword id="KW-1185">Reference proteome</keyword>
<keyword id="KW-0831">Ubiquinone biosynthesis</keyword>
<keyword id="KW-0862">Zinc</keyword>
<name>COQ4_DEBHA</name>
<reference key="1">
    <citation type="journal article" date="2004" name="Nature">
        <title>Genome evolution in yeasts.</title>
        <authorList>
            <person name="Dujon B."/>
            <person name="Sherman D."/>
            <person name="Fischer G."/>
            <person name="Durrens P."/>
            <person name="Casaregola S."/>
            <person name="Lafontaine I."/>
            <person name="de Montigny J."/>
            <person name="Marck C."/>
            <person name="Neuveglise C."/>
            <person name="Talla E."/>
            <person name="Goffard N."/>
            <person name="Frangeul L."/>
            <person name="Aigle M."/>
            <person name="Anthouard V."/>
            <person name="Babour A."/>
            <person name="Barbe V."/>
            <person name="Barnay S."/>
            <person name="Blanchin S."/>
            <person name="Beckerich J.-M."/>
            <person name="Beyne E."/>
            <person name="Bleykasten C."/>
            <person name="Boisrame A."/>
            <person name="Boyer J."/>
            <person name="Cattolico L."/>
            <person name="Confanioleri F."/>
            <person name="de Daruvar A."/>
            <person name="Despons L."/>
            <person name="Fabre E."/>
            <person name="Fairhead C."/>
            <person name="Ferry-Dumazet H."/>
            <person name="Groppi A."/>
            <person name="Hantraye F."/>
            <person name="Hennequin C."/>
            <person name="Jauniaux N."/>
            <person name="Joyet P."/>
            <person name="Kachouri R."/>
            <person name="Kerrest A."/>
            <person name="Koszul R."/>
            <person name="Lemaire M."/>
            <person name="Lesur I."/>
            <person name="Ma L."/>
            <person name="Muller H."/>
            <person name="Nicaud J.-M."/>
            <person name="Nikolski M."/>
            <person name="Oztas S."/>
            <person name="Ozier-Kalogeropoulos O."/>
            <person name="Pellenz S."/>
            <person name="Potier S."/>
            <person name="Richard G.-F."/>
            <person name="Straub M.-L."/>
            <person name="Suleau A."/>
            <person name="Swennen D."/>
            <person name="Tekaia F."/>
            <person name="Wesolowski-Louvel M."/>
            <person name="Westhof E."/>
            <person name="Wirth B."/>
            <person name="Zeniou-Meyer M."/>
            <person name="Zivanovic Y."/>
            <person name="Bolotin-Fukuhara M."/>
            <person name="Thierry A."/>
            <person name="Bouchier C."/>
            <person name="Caudron B."/>
            <person name="Scarpelli C."/>
            <person name="Gaillardin C."/>
            <person name="Weissenbach J."/>
            <person name="Wincker P."/>
            <person name="Souciet J.-L."/>
        </authorList>
    </citation>
    <scope>NUCLEOTIDE SEQUENCE [LARGE SCALE GENOMIC DNA]</scope>
    <source>
        <strain>ATCC 36239 / CBS 767 / BCRC 21394 / JCM 1990 / NBRC 0083 / IGC 2968</strain>
    </source>
</reference>
<accession>Q6BHU2</accession>
<feature type="chain" id="PRO_0000388113" description="Ubiquinone biosynthesis protein COQ4, mitochondrial">
    <location>
        <begin position="1"/>
        <end position="323"/>
    </location>
</feature>
<feature type="binding site" evidence="1">
    <location>
        <position position="209"/>
    </location>
    <ligand>
        <name>Zn(2+)</name>
        <dbReference type="ChEBI" id="CHEBI:29105"/>
    </ligand>
</feature>
<feature type="binding site" evidence="1">
    <location>
        <position position="210"/>
    </location>
    <ligand>
        <name>Zn(2+)</name>
        <dbReference type="ChEBI" id="CHEBI:29105"/>
    </ligand>
</feature>
<feature type="binding site" evidence="1">
    <location>
        <position position="213"/>
    </location>
    <ligand>
        <name>Zn(2+)</name>
        <dbReference type="ChEBI" id="CHEBI:29105"/>
    </ligand>
</feature>
<feature type="binding site" evidence="1">
    <location>
        <position position="225"/>
    </location>
    <ligand>
        <name>Zn(2+)</name>
        <dbReference type="ChEBI" id="CHEBI:29105"/>
    </ligand>
</feature>